<sequence length="160" mass="18100">MTAAVPNARLVDVELDESIGRSTPDVEHERAVAIFDLIEENSFHPIGDDTGGPYRLKLSLMESRLIFAITREAGEDVATHILSLTPLRRVVRDYFMICESYYQAIRSATPSKIEAIDMGRRGLHNEGSQTLQNRLQGKIEVDFNTARRLFTLVCVLHWRG</sequence>
<comment type="similarity">
    <text evidence="1">Belongs to the UPF0262 family.</text>
</comment>
<keyword id="KW-1185">Reference proteome</keyword>
<name>Y325_BRUA4</name>
<organism>
    <name type="scientific">Brucella anthropi (strain ATCC 49188 / DSM 6882 / CCUG 24695 / JCM 21032 / LMG 3331 / NBRC 15819 / NCTC 12168 / Alc 37)</name>
    <name type="common">Ochrobactrum anthropi</name>
    <dbReference type="NCBI Taxonomy" id="439375"/>
    <lineage>
        <taxon>Bacteria</taxon>
        <taxon>Pseudomonadati</taxon>
        <taxon>Pseudomonadota</taxon>
        <taxon>Alphaproteobacteria</taxon>
        <taxon>Hyphomicrobiales</taxon>
        <taxon>Brucellaceae</taxon>
        <taxon>Brucella/Ochrobactrum group</taxon>
        <taxon>Brucella</taxon>
    </lineage>
</organism>
<dbReference type="EMBL" id="CP000758">
    <property type="protein sequence ID" value="ABS13056.1"/>
    <property type="molecule type" value="Genomic_DNA"/>
</dbReference>
<dbReference type="RefSeq" id="WP_010658095.1">
    <property type="nucleotide sequence ID" value="NC_009667.1"/>
</dbReference>
<dbReference type="STRING" id="439375.Oant_0325"/>
<dbReference type="KEGG" id="oan:Oant_0325"/>
<dbReference type="eggNOG" id="COG5328">
    <property type="taxonomic scope" value="Bacteria"/>
</dbReference>
<dbReference type="HOGENOM" id="CLU_112904_0_0_5"/>
<dbReference type="PhylomeDB" id="A6WVQ2"/>
<dbReference type="Proteomes" id="UP000002301">
    <property type="component" value="Chromosome 1"/>
</dbReference>
<dbReference type="HAMAP" id="MF_00678">
    <property type="entry name" value="UPF0262"/>
    <property type="match status" value="1"/>
</dbReference>
<dbReference type="InterPro" id="IPR008321">
    <property type="entry name" value="UCP032146"/>
</dbReference>
<dbReference type="NCBIfam" id="NF002769">
    <property type="entry name" value="PRK02853.1"/>
    <property type="match status" value="1"/>
</dbReference>
<dbReference type="Pfam" id="PF06793">
    <property type="entry name" value="UPF0262"/>
    <property type="match status" value="1"/>
</dbReference>
<dbReference type="PIRSF" id="PIRSF032146">
    <property type="entry name" value="UCP032146"/>
    <property type="match status" value="1"/>
</dbReference>
<reference key="1">
    <citation type="journal article" date="2011" name="J. Bacteriol.">
        <title>Genome of Ochrobactrum anthropi ATCC 49188 T, a versatile opportunistic pathogen and symbiont of several eukaryotic hosts.</title>
        <authorList>
            <person name="Chain P.S."/>
            <person name="Lang D.M."/>
            <person name="Comerci D.J."/>
            <person name="Malfatti S.A."/>
            <person name="Vergez L.M."/>
            <person name="Shin M."/>
            <person name="Ugalde R.A."/>
            <person name="Garcia E."/>
            <person name="Tolmasky M.E."/>
        </authorList>
    </citation>
    <scope>NUCLEOTIDE SEQUENCE [LARGE SCALE GENOMIC DNA]</scope>
    <source>
        <strain>ATCC 49188 / DSM 6882 / CCUG 24695 / JCM 21032 / LMG 3331 / NBRC 15819 / NCTC 12168 / Alc 37</strain>
    </source>
</reference>
<gene>
    <name type="ordered locus">Oant_0325</name>
</gene>
<proteinExistence type="inferred from homology"/>
<protein>
    <recommendedName>
        <fullName evidence="1">UPF0262 protein Oant_0325</fullName>
    </recommendedName>
</protein>
<evidence type="ECO:0000255" key="1">
    <source>
        <dbReference type="HAMAP-Rule" id="MF_00678"/>
    </source>
</evidence>
<accession>A6WVQ2</accession>
<feature type="chain" id="PRO_0000314203" description="UPF0262 protein Oant_0325">
    <location>
        <begin position="1"/>
        <end position="160"/>
    </location>
</feature>